<reference key="1">
    <citation type="journal article" date="2014" name="Genome Announc.">
        <title>Complete Genome Sequence of the Extreme Thermophile Dictyoglomus thermophilum H-6-12.</title>
        <authorList>
            <person name="Coil D.A."/>
            <person name="Badger J.H."/>
            <person name="Forberger H.C."/>
            <person name="Riggs F."/>
            <person name="Madupu R."/>
            <person name="Fedorova N."/>
            <person name="Ward N."/>
            <person name="Robb F.T."/>
            <person name="Eisen J.A."/>
        </authorList>
    </citation>
    <scope>NUCLEOTIDE SEQUENCE [LARGE SCALE GENOMIC DNA]</scope>
    <source>
        <strain>ATCC 35947 / DSM 3960 / H-6-12</strain>
    </source>
</reference>
<protein>
    <recommendedName>
        <fullName evidence="1">Small ribosomal subunit protein bS16</fullName>
    </recommendedName>
    <alternativeName>
        <fullName evidence="2">30S ribosomal protein S16</fullName>
    </alternativeName>
</protein>
<feature type="chain" id="PRO_1000196391" description="Small ribosomal subunit protein bS16">
    <location>
        <begin position="1"/>
        <end position="93"/>
    </location>
</feature>
<accession>B5YFD8</accession>
<dbReference type="EMBL" id="CP001146">
    <property type="protein sequence ID" value="ACI18346.1"/>
    <property type="molecule type" value="Genomic_DNA"/>
</dbReference>
<dbReference type="RefSeq" id="WP_012546978.1">
    <property type="nucleotide sequence ID" value="NC_011297.1"/>
</dbReference>
<dbReference type="SMR" id="B5YFD8"/>
<dbReference type="STRING" id="309799.DICTH_1427"/>
<dbReference type="PaxDb" id="309799-DICTH_1427"/>
<dbReference type="KEGG" id="dth:DICTH_1427"/>
<dbReference type="eggNOG" id="COG0228">
    <property type="taxonomic scope" value="Bacteria"/>
</dbReference>
<dbReference type="HOGENOM" id="CLU_100590_5_2_0"/>
<dbReference type="OrthoDB" id="9807878at2"/>
<dbReference type="Proteomes" id="UP000001733">
    <property type="component" value="Chromosome"/>
</dbReference>
<dbReference type="GO" id="GO:0005737">
    <property type="term" value="C:cytoplasm"/>
    <property type="evidence" value="ECO:0007669"/>
    <property type="project" value="UniProtKB-ARBA"/>
</dbReference>
<dbReference type="GO" id="GO:0015935">
    <property type="term" value="C:small ribosomal subunit"/>
    <property type="evidence" value="ECO:0007669"/>
    <property type="project" value="TreeGrafter"/>
</dbReference>
<dbReference type="GO" id="GO:0003735">
    <property type="term" value="F:structural constituent of ribosome"/>
    <property type="evidence" value="ECO:0007669"/>
    <property type="project" value="InterPro"/>
</dbReference>
<dbReference type="GO" id="GO:0006412">
    <property type="term" value="P:translation"/>
    <property type="evidence" value="ECO:0007669"/>
    <property type="project" value="UniProtKB-UniRule"/>
</dbReference>
<dbReference type="FunFam" id="3.30.1320.10:FF:000010">
    <property type="entry name" value="30S ribosomal protein S16"/>
    <property type="match status" value="1"/>
</dbReference>
<dbReference type="Gene3D" id="3.30.1320.10">
    <property type="match status" value="1"/>
</dbReference>
<dbReference type="HAMAP" id="MF_00385">
    <property type="entry name" value="Ribosomal_bS16"/>
    <property type="match status" value="1"/>
</dbReference>
<dbReference type="InterPro" id="IPR000307">
    <property type="entry name" value="Ribosomal_bS16"/>
</dbReference>
<dbReference type="InterPro" id="IPR020592">
    <property type="entry name" value="Ribosomal_bS16_CS"/>
</dbReference>
<dbReference type="InterPro" id="IPR023803">
    <property type="entry name" value="Ribosomal_bS16_dom_sf"/>
</dbReference>
<dbReference type="NCBIfam" id="TIGR00002">
    <property type="entry name" value="S16"/>
    <property type="match status" value="1"/>
</dbReference>
<dbReference type="PANTHER" id="PTHR12919">
    <property type="entry name" value="30S RIBOSOMAL PROTEIN S16"/>
    <property type="match status" value="1"/>
</dbReference>
<dbReference type="PANTHER" id="PTHR12919:SF20">
    <property type="entry name" value="SMALL RIBOSOMAL SUBUNIT PROTEIN BS16M"/>
    <property type="match status" value="1"/>
</dbReference>
<dbReference type="Pfam" id="PF00886">
    <property type="entry name" value="Ribosomal_S16"/>
    <property type="match status" value="1"/>
</dbReference>
<dbReference type="SUPFAM" id="SSF54565">
    <property type="entry name" value="Ribosomal protein S16"/>
    <property type="match status" value="1"/>
</dbReference>
<dbReference type="PROSITE" id="PS00732">
    <property type="entry name" value="RIBOSOMAL_S16"/>
    <property type="match status" value="1"/>
</dbReference>
<keyword id="KW-0687">Ribonucleoprotein</keyword>
<keyword id="KW-0689">Ribosomal protein</keyword>
<sequence length="93" mass="10582">MVKIRLTRVGAKNKPAYRIVAMDSREPRDGKHLEILGFYDPKTDPATIQLKEERILYWLSQGAQPTDTVLSILKKYGVWDKFLAMKTSAKSSA</sequence>
<organism>
    <name type="scientific">Dictyoglomus thermophilum (strain ATCC 35947 / DSM 3960 / H-6-12)</name>
    <dbReference type="NCBI Taxonomy" id="309799"/>
    <lineage>
        <taxon>Bacteria</taxon>
        <taxon>Pseudomonadati</taxon>
        <taxon>Dictyoglomota</taxon>
        <taxon>Dictyoglomia</taxon>
        <taxon>Dictyoglomales</taxon>
        <taxon>Dictyoglomaceae</taxon>
        <taxon>Dictyoglomus</taxon>
    </lineage>
</organism>
<name>RS16_DICT6</name>
<comment type="similarity">
    <text evidence="1">Belongs to the bacterial ribosomal protein bS16 family.</text>
</comment>
<evidence type="ECO:0000255" key="1">
    <source>
        <dbReference type="HAMAP-Rule" id="MF_00385"/>
    </source>
</evidence>
<evidence type="ECO:0000305" key="2"/>
<gene>
    <name evidence="1" type="primary">rpsP</name>
    <name type="ordered locus">DICTH_1427</name>
</gene>
<proteinExistence type="inferred from homology"/>